<protein>
    <recommendedName>
        <fullName>Peptidyl-prolyl cis-trans isomerase FKBP5</fullName>
        <shortName>PPIase FKBP5</shortName>
        <ecNumber evidence="1">5.2.1.8</ecNumber>
    </recommendedName>
    <alternativeName>
        <fullName>51 kDa FK506-binding protein</fullName>
        <shortName>51 kDa FKBP</shortName>
        <shortName>FKBP-51</shortName>
    </alternativeName>
    <alternativeName>
        <fullName>FK506-binding protein 5</fullName>
        <shortName>FKBP-5</shortName>
    </alternativeName>
    <alternativeName>
        <fullName>Rotamase</fullName>
    </alternativeName>
</protein>
<evidence type="ECO:0000250" key="1">
    <source>
        <dbReference type="UniProtKB" id="Q13451"/>
    </source>
</evidence>
<evidence type="ECO:0000250" key="2">
    <source>
        <dbReference type="UniProtKB" id="Q64378"/>
    </source>
</evidence>
<evidence type="ECO:0000255" key="3">
    <source>
        <dbReference type="PROSITE-ProRule" id="PRU00277"/>
    </source>
</evidence>
<evidence type="ECO:0000256" key="4">
    <source>
        <dbReference type="SAM" id="MobiDB-lite"/>
    </source>
</evidence>
<evidence type="ECO:0000269" key="5">
    <source>
    </source>
</evidence>
<name>FKBP5_SAGOE</name>
<reference key="1">
    <citation type="journal article" date="2001" name="Gen. Comp. Endocrinol.">
        <title>Overexpression of the FK506-binding immunophilin FKBP51 is the common cause of glucocorticoid resistance in three New World primates.</title>
        <authorList>
            <person name="Scammell J.G."/>
            <person name="Denny W.B."/>
            <person name="Valentine D.L."/>
            <person name="Smith D.F."/>
        </authorList>
    </citation>
    <scope>NUCLEOTIDE SEQUENCE [MRNA]</scope>
    <scope>FUNCTION</scope>
    <source>
        <tissue>B-cell</tissue>
    </source>
</reference>
<gene>
    <name type="primary">FKBP5</name>
    <name type="synonym">FKBP51</name>
</gene>
<accession>Q9XSI2</accession>
<keyword id="KW-0007">Acetylation</keyword>
<keyword id="KW-0143">Chaperone</keyword>
<keyword id="KW-0963">Cytoplasm</keyword>
<keyword id="KW-0413">Isomerase</keyword>
<keyword id="KW-0539">Nucleus</keyword>
<keyword id="KW-0597">Phosphoprotein</keyword>
<keyword id="KW-0677">Repeat</keyword>
<keyword id="KW-0697">Rotamase</keyword>
<keyword id="KW-0802">TPR repeat</keyword>
<keyword id="KW-0832">Ubl conjugation</keyword>
<comment type="function">
    <text evidence="1 5">Immunophilin protein with PPIase and co-chaperone activities. Component of unligated steroid receptors heterocomplexes through interaction with heat-shock protein 90 (HSP90). Plays a role in the intracellular trafficking of heterooligomeric forms of steroid hormone receptors maintaining the complex into the cytoplasm when unliganded (PubMed:11703081). Acts as a regulator of Akt/AKT1 activity by promoting the interaction between Akt/AKT1 and PHLPP1, thereby enhancing dephosphorylation and subsequent activation of Akt/AKT1. Interacts with IKBKE and IKBKB which facilitates IKK complex assembly leading to increased IKBKE and IKBKB kinase activity, NF-kappaB activation, and IFN production.</text>
</comment>
<comment type="catalytic activity">
    <reaction evidence="1">
        <text>[protein]-peptidylproline (omega=180) = [protein]-peptidylproline (omega=0)</text>
        <dbReference type="Rhea" id="RHEA:16237"/>
        <dbReference type="Rhea" id="RHEA-COMP:10747"/>
        <dbReference type="Rhea" id="RHEA-COMP:10748"/>
        <dbReference type="ChEBI" id="CHEBI:83833"/>
        <dbReference type="ChEBI" id="CHEBI:83834"/>
        <dbReference type="EC" id="5.2.1.8"/>
    </reaction>
</comment>
<comment type="activity regulation">
    <text evidence="2">Inhibited by both FK506 and rapamycin.</text>
</comment>
<comment type="subunit">
    <text evidence="1 2">Part of a heteromultimeric cytoplasmic complex with HSP90AA1, HSPA1A/HSPA1B and steroid receptors. Upon ligand binding dissociates from the complex and FKBP4 takes its place (By similarity). Interacts with functionally mature heterooligomeric progesterone receptor complexes along with HSP90 and TEBP (By similarity). Interacts with NR3C1 (By similarity). Interacts with Akt/AKT1 and PHLPP1; enhancing dephosphorylation and subsequent activation of Akt/AKT1 (By similarity). Interacts with IFI44L; this interaction modulates the kinase activity of IKBKB and IKBKE (By similarity). Interacts with IKBKB and IKBKE (By similarity).</text>
</comment>
<comment type="subcellular location">
    <subcellularLocation>
        <location evidence="2">Cytoplasm</location>
    </subcellularLocation>
    <subcellularLocation>
        <location evidence="2">Nucleus</location>
    </subcellularLocation>
</comment>
<comment type="PTM">
    <text evidence="1">Acetylation impairs ability to promote interaction between Akt/AKT1 and PHLPP1. Deacetylation by SIRT7 promotes interaction between Akt/AKT1 and PHLPP1, leading to suppress Akt/AKT1 activation.</text>
</comment>
<comment type="PTM">
    <text evidence="1">Ubiquitinated, leading to degradation in a proteasome-dependent manner. Deubiquitinated by USP49, leading to stabilization.</text>
</comment>
<comment type="miscellaneous">
    <text evidence="5">The relative resistance of New World monkeys to glucocorticoids is associated with a high level of expression of FKBP5, but is also due to intrinsic differences between the human and the monkey proteins. Human FKBP5 has a much lower effect on glucocorticoid sensitivity.</text>
</comment>
<organism>
    <name type="scientific">Saguinus oedipus</name>
    <name type="common">Cotton-top tamarin</name>
    <dbReference type="NCBI Taxonomy" id="9490"/>
    <lineage>
        <taxon>Eukaryota</taxon>
        <taxon>Metazoa</taxon>
        <taxon>Chordata</taxon>
        <taxon>Craniata</taxon>
        <taxon>Vertebrata</taxon>
        <taxon>Euteleostomi</taxon>
        <taxon>Mammalia</taxon>
        <taxon>Eutheria</taxon>
        <taxon>Euarchontoglires</taxon>
        <taxon>Primates</taxon>
        <taxon>Haplorrhini</taxon>
        <taxon>Platyrrhini</taxon>
        <taxon>Cebidae</taxon>
        <taxon>Callitrichinae</taxon>
        <taxon>Saguinus</taxon>
    </lineage>
</organism>
<sequence>MTTDEGAKSSRENPAATVAEQGEDVTSKKDRGVLKIVKRVGHGEETPMIGDKVYVHYNGKLSNGKKFDSSHDRNEPFVFSIGKGQVIKAWDIGVSTMKKGEICHLLCKPEYAYGATGSLPKIPSNATLFFEVELLNFKGEDLLEDGGIIRRTKRRGEGYSNPNEGARVQIHLEGRCGGRVFDCRDVAFTVGEGEDHDIPIGIDKALEKMQREEQCILHLGPRYGFGEAGKPKFGIEPNAELIYEVTLKSFEKAKESWEMDTKEKLEQAAIVKEEGTVYFKGGKYVQAVIQYGKIVSWLEMEYGLSEKESKASESFLLAAFLNLAMCYLKLREYAKAVECCDKALGLDSANEKGLYRRGEAQLLMNEFESAKGDFEKVLEVNPQNKAARLQIVVCQKKAKEHNERDRRIYANMFKKFAEQDAKEEANKAVSKKTSEGVTNEKLTVSHAVEEEKPEGHV</sequence>
<proteinExistence type="evidence at transcript level"/>
<dbReference type="EC" id="5.2.1.8" evidence="1"/>
<dbReference type="EMBL" id="AF143809">
    <property type="protein sequence ID" value="AAD33918.2"/>
    <property type="molecule type" value="mRNA"/>
</dbReference>
<dbReference type="SMR" id="Q9XSI2"/>
<dbReference type="GO" id="GO:0005737">
    <property type="term" value="C:cytoplasm"/>
    <property type="evidence" value="ECO:0007669"/>
    <property type="project" value="UniProtKB-SubCell"/>
</dbReference>
<dbReference type="GO" id="GO:0005634">
    <property type="term" value="C:nucleus"/>
    <property type="evidence" value="ECO:0007669"/>
    <property type="project" value="UniProtKB-SubCell"/>
</dbReference>
<dbReference type="GO" id="GO:0003755">
    <property type="term" value="F:peptidyl-prolyl cis-trans isomerase activity"/>
    <property type="evidence" value="ECO:0000250"/>
    <property type="project" value="UniProtKB"/>
</dbReference>
<dbReference type="GO" id="GO:0061077">
    <property type="term" value="P:chaperone-mediated protein folding"/>
    <property type="evidence" value="ECO:0000250"/>
    <property type="project" value="UniProtKB"/>
</dbReference>
<dbReference type="FunFam" id="1.25.40.10:FF:000008">
    <property type="entry name" value="Peptidylprolyl isomerase"/>
    <property type="match status" value="1"/>
</dbReference>
<dbReference type="FunFam" id="3.10.50.40:FF:000011">
    <property type="entry name" value="Peptidylprolyl isomerase"/>
    <property type="match status" value="1"/>
</dbReference>
<dbReference type="FunFam" id="3.10.50.40:FF:000013">
    <property type="entry name" value="Peptidylprolyl isomerase"/>
    <property type="match status" value="1"/>
</dbReference>
<dbReference type="Gene3D" id="3.10.50.40">
    <property type="match status" value="2"/>
</dbReference>
<dbReference type="Gene3D" id="1.25.40.10">
    <property type="entry name" value="Tetratricopeptide repeat domain"/>
    <property type="match status" value="1"/>
</dbReference>
<dbReference type="InterPro" id="IPR050754">
    <property type="entry name" value="FKBP4/5/8-like"/>
</dbReference>
<dbReference type="InterPro" id="IPR046357">
    <property type="entry name" value="PPIase_dom_sf"/>
</dbReference>
<dbReference type="InterPro" id="IPR001179">
    <property type="entry name" value="PPIase_FKBP_dom"/>
</dbReference>
<dbReference type="InterPro" id="IPR011990">
    <property type="entry name" value="TPR-like_helical_dom_sf"/>
</dbReference>
<dbReference type="InterPro" id="IPR019734">
    <property type="entry name" value="TPR_rpt"/>
</dbReference>
<dbReference type="PANTHER" id="PTHR46512">
    <property type="entry name" value="PEPTIDYLPROLYL ISOMERASE"/>
    <property type="match status" value="1"/>
</dbReference>
<dbReference type="PANTHER" id="PTHR46512:SF9">
    <property type="entry name" value="PEPTIDYLPROLYL ISOMERASE"/>
    <property type="match status" value="1"/>
</dbReference>
<dbReference type="Pfam" id="PF00254">
    <property type="entry name" value="FKBP_C"/>
    <property type="match status" value="2"/>
</dbReference>
<dbReference type="Pfam" id="PF00515">
    <property type="entry name" value="TPR_1"/>
    <property type="match status" value="1"/>
</dbReference>
<dbReference type="Pfam" id="PF13181">
    <property type="entry name" value="TPR_8"/>
    <property type="match status" value="1"/>
</dbReference>
<dbReference type="SMART" id="SM00028">
    <property type="entry name" value="TPR"/>
    <property type="match status" value="2"/>
</dbReference>
<dbReference type="SUPFAM" id="SSF54534">
    <property type="entry name" value="FKBP-like"/>
    <property type="match status" value="2"/>
</dbReference>
<dbReference type="SUPFAM" id="SSF48452">
    <property type="entry name" value="TPR-like"/>
    <property type="match status" value="1"/>
</dbReference>
<dbReference type="PROSITE" id="PS50059">
    <property type="entry name" value="FKBP_PPIASE"/>
    <property type="match status" value="2"/>
</dbReference>
<dbReference type="PROSITE" id="PS50005">
    <property type="entry name" value="TPR"/>
    <property type="match status" value="3"/>
</dbReference>
<dbReference type="PROSITE" id="PS50293">
    <property type="entry name" value="TPR_REGION"/>
    <property type="match status" value="1"/>
</dbReference>
<feature type="chain" id="PRO_0000075327" description="Peptidyl-prolyl cis-trans isomerase FKBP5">
    <location>
        <begin position="1"/>
        <end position="457"/>
    </location>
</feature>
<feature type="domain" description="PPIase FKBP-type 1" evidence="3">
    <location>
        <begin position="50"/>
        <end position="138"/>
    </location>
</feature>
<feature type="domain" description="PPIase FKBP-type 2" evidence="3">
    <location>
        <begin position="165"/>
        <end position="251"/>
    </location>
</feature>
<feature type="repeat" description="TPR 1">
    <location>
        <begin position="268"/>
        <end position="301"/>
    </location>
</feature>
<feature type="repeat" description="TPR 2">
    <location>
        <begin position="317"/>
        <end position="350"/>
    </location>
</feature>
<feature type="repeat" description="TPR 3">
    <location>
        <begin position="351"/>
        <end position="384"/>
    </location>
</feature>
<feature type="region of interest" description="Disordered" evidence="4">
    <location>
        <begin position="1"/>
        <end position="28"/>
    </location>
</feature>
<feature type="region of interest" description="Disordered" evidence="4">
    <location>
        <begin position="424"/>
        <end position="457"/>
    </location>
</feature>
<feature type="compositionally biased region" description="Basic and acidic residues" evidence="4">
    <location>
        <begin position="1"/>
        <end position="11"/>
    </location>
</feature>
<feature type="compositionally biased region" description="Basic and acidic residues" evidence="4">
    <location>
        <begin position="447"/>
        <end position="457"/>
    </location>
</feature>
<feature type="modified residue" description="N-acetylmethionine" evidence="1">
    <location>
        <position position="1"/>
    </location>
</feature>
<feature type="modified residue" description="N6-acetyllysine" evidence="1">
    <location>
        <position position="28"/>
    </location>
</feature>
<feature type="modified residue" description="Phosphoserine" evidence="1">
    <location>
        <position position="445"/>
    </location>
</feature>